<evidence type="ECO:0000255" key="1">
    <source>
        <dbReference type="HAMAP-Rule" id="MF_01337"/>
    </source>
</evidence>
<evidence type="ECO:0000256" key="2">
    <source>
        <dbReference type="SAM" id="MobiDB-lite"/>
    </source>
</evidence>
<evidence type="ECO:0000305" key="3"/>
<proteinExistence type="inferred from homology"/>
<gene>
    <name evidence="1" type="primary">rplR</name>
    <name evidence="1" type="synonym">rpl18</name>
    <name type="ordered locus">SynWH7803_0419</name>
</gene>
<dbReference type="EMBL" id="CT971583">
    <property type="protein sequence ID" value="CAK22845.1"/>
    <property type="molecule type" value="Genomic_DNA"/>
</dbReference>
<dbReference type="SMR" id="A5GIT0"/>
<dbReference type="STRING" id="32051.SynWH7803_0419"/>
<dbReference type="KEGG" id="syx:SynWH7803_0419"/>
<dbReference type="eggNOG" id="COG0256">
    <property type="taxonomic scope" value="Bacteria"/>
</dbReference>
<dbReference type="HOGENOM" id="CLU_098841_0_1_3"/>
<dbReference type="OrthoDB" id="9810939at2"/>
<dbReference type="Proteomes" id="UP000001566">
    <property type="component" value="Chromosome"/>
</dbReference>
<dbReference type="GO" id="GO:0022625">
    <property type="term" value="C:cytosolic large ribosomal subunit"/>
    <property type="evidence" value="ECO:0007669"/>
    <property type="project" value="TreeGrafter"/>
</dbReference>
<dbReference type="GO" id="GO:0008097">
    <property type="term" value="F:5S rRNA binding"/>
    <property type="evidence" value="ECO:0007669"/>
    <property type="project" value="TreeGrafter"/>
</dbReference>
<dbReference type="GO" id="GO:0003735">
    <property type="term" value="F:structural constituent of ribosome"/>
    <property type="evidence" value="ECO:0007669"/>
    <property type="project" value="InterPro"/>
</dbReference>
<dbReference type="GO" id="GO:0006412">
    <property type="term" value="P:translation"/>
    <property type="evidence" value="ECO:0007669"/>
    <property type="project" value="UniProtKB-UniRule"/>
</dbReference>
<dbReference type="CDD" id="cd00432">
    <property type="entry name" value="Ribosomal_L18_L5e"/>
    <property type="match status" value="1"/>
</dbReference>
<dbReference type="FunFam" id="3.30.420.100:FF:000001">
    <property type="entry name" value="50S ribosomal protein L18"/>
    <property type="match status" value="1"/>
</dbReference>
<dbReference type="Gene3D" id="3.30.420.100">
    <property type="match status" value="1"/>
</dbReference>
<dbReference type="HAMAP" id="MF_01337_B">
    <property type="entry name" value="Ribosomal_uL18_B"/>
    <property type="match status" value="1"/>
</dbReference>
<dbReference type="InterPro" id="IPR004389">
    <property type="entry name" value="Ribosomal_uL18_bac-type"/>
</dbReference>
<dbReference type="InterPro" id="IPR005484">
    <property type="entry name" value="Ribosomal_uL18_bac/euk"/>
</dbReference>
<dbReference type="NCBIfam" id="TIGR00060">
    <property type="entry name" value="L18_bact"/>
    <property type="match status" value="1"/>
</dbReference>
<dbReference type="PANTHER" id="PTHR12899">
    <property type="entry name" value="39S RIBOSOMAL PROTEIN L18, MITOCHONDRIAL"/>
    <property type="match status" value="1"/>
</dbReference>
<dbReference type="PANTHER" id="PTHR12899:SF3">
    <property type="entry name" value="LARGE RIBOSOMAL SUBUNIT PROTEIN UL18M"/>
    <property type="match status" value="1"/>
</dbReference>
<dbReference type="Pfam" id="PF00861">
    <property type="entry name" value="Ribosomal_L18p"/>
    <property type="match status" value="1"/>
</dbReference>
<dbReference type="SUPFAM" id="SSF53137">
    <property type="entry name" value="Translational machinery components"/>
    <property type="match status" value="1"/>
</dbReference>
<comment type="function">
    <text evidence="1">This is one of the proteins that bind and probably mediate the attachment of the 5S RNA into the large ribosomal subunit, where it forms part of the central protuberance.</text>
</comment>
<comment type="subunit">
    <text evidence="1">Part of the 50S ribosomal subunit; part of the 5S rRNA/L5/L18/L25 subcomplex. Contacts the 5S and 23S rRNAs.</text>
</comment>
<comment type="similarity">
    <text evidence="1">Belongs to the universal ribosomal protein uL18 family.</text>
</comment>
<protein>
    <recommendedName>
        <fullName evidence="1">Large ribosomal subunit protein uL18</fullName>
    </recommendedName>
    <alternativeName>
        <fullName evidence="3">50S ribosomal protein L18</fullName>
    </alternativeName>
</protein>
<organism>
    <name type="scientific">Synechococcus sp. (strain WH7803)</name>
    <dbReference type="NCBI Taxonomy" id="32051"/>
    <lineage>
        <taxon>Bacteria</taxon>
        <taxon>Bacillati</taxon>
        <taxon>Cyanobacteriota</taxon>
        <taxon>Cyanophyceae</taxon>
        <taxon>Synechococcales</taxon>
        <taxon>Synechococcaceae</taxon>
        <taxon>Synechococcus</taxon>
    </lineage>
</organism>
<accession>A5GIT0</accession>
<feature type="chain" id="PRO_1000053127" description="Large ribosomal subunit protein uL18">
    <location>
        <begin position="1"/>
        <end position="122"/>
    </location>
</feature>
<feature type="region of interest" description="Disordered" evidence="2">
    <location>
        <begin position="1"/>
        <end position="24"/>
    </location>
</feature>
<feature type="compositionally biased region" description="Basic residues" evidence="2">
    <location>
        <begin position="9"/>
        <end position="21"/>
    </location>
</feature>
<reference key="1">
    <citation type="submission" date="2006-05" db="EMBL/GenBank/DDBJ databases">
        <authorList>
            <consortium name="Genoscope"/>
        </authorList>
    </citation>
    <scope>NUCLEOTIDE SEQUENCE [LARGE SCALE GENOMIC DNA]</scope>
    <source>
        <strain>WH7803</strain>
    </source>
</reference>
<sequence>MSTLSRKQQTQKRHRRLRRHLSGTADRPRLAVFRSNSHIYAQVIDDAAQSTLCSASTLDKDLRTSLTATGSTCDASVAVGELVAKRALAKGIQQVVFDRGGNLYHGRVKALADAAREAGLQF</sequence>
<name>RL18_SYNPW</name>
<keyword id="KW-1185">Reference proteome</keyword>
<keyword id="KW-0687">Ribonucleoprotein</keyword>
<keyword id="KW-0689">Ribosomal protein</keyword>
<keyword id="KW-0694">RNA-binding</keyword>
<keyword id="KW-0699">rRNA-binding</keyword>